<sequence length="127" mass="14196">MQDDPRYRVEVEVSPRFLAHQSTPDEGRYAFAYSIRIQNAGAVPARLIARHWQITDGNGRTEQVDGEGVVGEQPWLRPGEAFHYTSGVLLETEQGQMQGHYDMVADDGTEFIAPIAAFVLSVPRTLH</sequence>
<feature type="chain" id="PRO_1000083668" description="Protein ApaG">
    <location>
        <begin position="1"/>
        <end position="127"/>
    </location>
</feature>
<feature type="domain" description="ApaG" evidence="1">
    <location>
        <begin position="3"/>
        <end position="127"/>
    </location>
</feature>
<accession>Q3BX83</accession>
<organism>
    <name type="scientific">Xanthomonas euvesicatoria pv. vesicatoria (strain 85-10)</name>
    <name type="common">Xanthomonas campestris pv. vesicatoria</name>
    <dbReference type="NCBI Taxonomy" id="316273"/>
    <lineage>
        <taxon>Bacteria</taxon>
        <taxon>Pseudomonadati</taxon>
        <taxon>Pseudomonadota</taxon>
        <taxon>Gammaproteobacteria</taxon>
        <taxon>Lysobacterales</taxon>
        <taxon>Lysobacteraceae</taxon>
        <taxon>Xanthomonas</taxon>
    </lineage>
</organism>
<reference key="1">
    <citation type="journal article" date="2005" name="J. Bacteriol.">
        <title>Insights into genome plasticity and pathogenicity of the plant pathogenic Bacterium Xanthomonas campestris pv. vesicatoria revealed by the complete genome sequence.</title>
        <authorList>
            <person name="Thieme F."/>
            <person name="Koebnik R."/>
            <person name="Bekel T."/>
            <person name="Berger C."/>
            <person name="Boch J."/>
            <person name="Buettner D."/>
            <person name="Caldana C."/>
            <person name="Gaigalat L."/>
            <person name="Goesmann A."/>
            <person name="Kay S."/>
            <person name="Kirchner O."/>
            <person name="Lanz C."/>
            <person name="Linke B."/>
            <person name="McHardy A.C."/>
            <person name="Meyer F."/>
            <person name="Mittenhuber G."/>
            <person name="Nies D.H."/>
            <person name="Niesbach-Kloesgen U."/>
            <person name="Patschkowski T."/>
            <person name="Rueckert C."/>
            <person name="Rupp O."/>
            <person name="Schneiker S."/>
            <person name="Schuster S.C."/>
            <person name="Vorhoelter F.J."/>
            <person name="Weber E."/>
            <person name="Puehler A."/>
            <person name="Bonas U."/>
            <person name="Bartels D."/>
            <person name="Kaiser O."/>
        </authorList>
    </citation>
    <scope>NUCLEOTIDE SEQUENCE [LARGE SCALE GENOMIC DNA]</scope>
    <source>
        <strain>85-10</strain>
    </source>
</reference>
<dbReference type="EMBL" id="AM039952">
    <property type="protein sequence ID" value="CAJ22530.1"/>
    <property type="molecule type" value="Genomic_DNA"/>
</dbReference>
<dbReference type="RefSeq" id="WP_007965232.1">
    <property type="nucleotide sequence ID" value="NZ_CP017190.1"/>
</dbReference>
<dbReference type="BMRB" id="Q3BX83"/>
<dbReference type="SMR" id="Q3BX83"/>
<dbReference type="STRING" id="456327.BJD11_18295"/>
<dbReference type="GeneID" id="97509229"/>
<dbReference type="KEGG" id="xcv:XCV0899"/>
<dbReference type="eggNOG" id="COG2967">
    <property type="taxonomic scope" value="Bacteria"/>
</dbReference>
<dbReference type="HOGENOM" id="CLU_128074_1_0_6"/>
<dbReference type="Proteomes" id="UP000007069">
    <property type="component" value="Chromosome"/>
</dbReference>
<dbReference type="GO" id="GO:0070987">
    <property type="term" value="P:error-free translesion synthesis"/>
    <property type="evidence" value="ECO:0007669"/>
    <property type="project" value="TreeGrafter"/>
</dbReference>
<dbReference type="Gene3D" id="2.60.40.1470">
    <property type="entry name" value="ApaG domain"/>
    <property type="match status" value="1"/>
</dbReference>
<dbReference type="HAMAP" id="MF_00791">
    <property type="entry name" value="ApaG"/>
    <property type="match status" value="1"/>
</dbReference>
<dbReference type="InterPro" id="IPR007474">
    <property type="entry name" value="ApaG_domain"/>
</dbReference>
<dbReference type="InterPro" id="IPR036767">
    <property type="entry name" value="ApaG_sf"/>
</dbReference>
<dbReference type="InterPro" id="IPR023065">
    <property type="entry name" value="Uncharacterised_ApaG"/>
</dbReference>
<dbReference type="NCBIfam" id="NF003967">
    <property type="entry name" value="PRK05461.1"/>
    <property type="match status" value="1"/>
</dbReference>
<dbReference type="PANTHER" id="PTHR14289">
    <property type="entry name" value="F-BOX ONLY PROTEIN 3"/>
    <property type="match status" value="1"/>
</dbReference>
<dbReference type="PANTHER" id="PTHR14289:SF16">
    <property type="entry name" value="POLYMERASE DELTA-INTERACTING PROTEIN 2"/>
    <property type="match status" value="1"/>
</dbReference>
<dbReference type="Pfam" id="PF04379">
    <property type="entry name" value="DUF525"/>
    <property type="match status" value="1"/>
</dbReference>
<dbReference type="SUPFAM" id="SSF110069">
    <property type="entry name" value="ApaG-like"/>
    <property type="match status" value="1"/>
</dbReference>
<dbReference type="PROSITE" id="PS51087">
    <property type="entry name" value="APAG"/>
    <property type="match status" value="1"/>
</dbReference>
<protein>
    <recommendedName>
        <fullName evidence="1">Protein ApaG</fullName>
    </recommendedName>
</protein>
<gene>
    <name evidence="1" type="primary">apaG</name>
    <name type="ordered locus">XCV0899</name>
</gene>
<name>APAG_XANE5</name>
<evidence type="ECO:0000255" key="1">
    <source>
        <dbReference type="HAMAP-Rule" id="MF_00791"/>
    </source>
</evidence>
<proteinExistence type="inferred from homology"/>